<dbReference type="EMBL" id="EU117376">
    <property type="protein sequence ID" value="ABV66193.1"/>
    <property type="molecule type" value="Genomic_DNA"/>
</dbReference>
<dbReference type="RefSeq" id="YP_001718476.1">
    <property type="nucleotide sequence ID" value="NC_010433.1"/>
</dbReference>
<dbReference type="SMR" id="B1NWI9"/>
<dbReference type="GeneID" id="6000051"/>
<dbReference type="KEGG" id="mesc:6000051"/>
<dbReference type="OrthoDB" id="1840754at2759"/>
<dbReference type="GO" id="GO:0009507">
    <property type="term" value="C:chloroplast"/>
    <property type="evidence" value="ECO:0007669"/>
    <property type="project" value="UniProtKB-SubCell"/>
</dbReference>
<dbReference type="GO" id="GO:0015934">
    <property type="term" value="C:large ribosomal subunit"/>
    <property type="evidence" value="ECO:0007669"/>
    <property type="project" value="InterPro"/>
</dbReference>
<dbReference type="GO" id="GO:0019843">
    <property type="term" value="F:rRNA binding"/>
    <property type="evidence" value="ECO:0007669"/>
    <property type="project" value="UniProtKB-UniRule"/>
</dbReference>
<dbReference type="GO" id="GO:0003735">
    <property type="term" value="F:structural constituent of ribosome"/>
    <property type="evidence" value="ECO:0007669"/>
    <property type="project" value="InterPro"/>
</dbReference>
<dbReference type="GO" id="GO:0006412">
    <property type="term" value="P:translation"/>
    <property type="evidence" value="ECO:0007669"/>
    <property type="project" value="UniProtKB-UniRule"/>
</dbReference>
<dbReference type="CDD" id="cd00336">
    <property type="entry name" value="Ribosomal_L22"/>
    <property type="match status" value="1"/>
</dbReference>
<dbReference type="FunFam" id="3.90.470.10:FF:000006">
    <property type="entry name" value="50S ribosomal protein L22, chloroplastic"/>
    <property type="match status" value="1"/>
</dbReference>
<dbReference type="Gene3D" id="3.90.470.10">
    <property type="entry name" value="Ribosomal protein L22/L17"/>
    <property type="match status" value="1"/>
</dbReference>
<dbReference type="HAMAP" id="MF_01331_B">
    <property type="entry name" value="Ribosomal_uL22_B"/>
    <property type="match status" value="1"/>
</dbReference>
<dbReference type="InterPro" id="IPR001063">
    <property type="entry name" value="Ribosomal_uL22"/>
</dbReference>
<dbReference type="InterPro" id="IPR005727">
    <property type="entry name" value="Ribosomal_uL22_bac/chlpt-type"/>
</dbReference>
<dbReference type="InterPro" id="IPR047867">
    <property type="entry name" value="Ribosomal_uL22_bac/org-type"/>
</dbReference>
<dbReference type="InterPro" id="IPR036394">
    <property type="entry name" value="Ribosomal_uL22_sf"/>
</dbReference>
<dbReference type="NCBIfam" id="TIGR01044">
    <property type="entry name" value="rplV_bact"/>
    <property type="match status" value="1"/>
</dbReference>
<dbReference type="PANTHER" id="PTHR13501">
    <property type="entry name" value="CHLOROPLAST 50S RIBOSOMAL PROTEIN L22-RELATED"/>
    <property type="match status" value="1"/>
</dbReference>
<dbReference type="PANTHER" id="PTHR13501:SF10">
    <property type="entry name" value="LARGE RIBOSOMAL SUBUNIT PROTEIN UL22M"/>
    <property type="match status" value="1"/>
</dbReference>
<dbReference type="Pfam" id="PF00237">
    <property type="entry name" value="Ribosomal_L22"/>
    <property type="match status" value="1"/>
</dbReference>
<dbReference type="SUPFAM" id="SSF54843">
    <property type="entry name" value="Ribosomal protein L22"/>
    <property type="match status" value="1"/>
</dbReference>
<evidence type="ECO:0000250" key="1"/>
<evidence type="ECO:0000305" key="2"/>
<comment type="function">
    <text evidence="1">This protein binds specifically to 23S rRNA.</text>
</comment>
<comment type="function">
    <text evidence="1">The globular domain of the protein is located near the polypeptide exit tunnel on the outside of the subunit, while an extended beta-hairpin is found that lines the wall of the exit tunnel in the center of the 70S ribosome.</text>
</comment>
<comment type="subunit">
    <text evidence="1">Part of the 50S ribosomal subunit.</text>
</comment>
<comment type="subcellular location">
    <subcellularLocation>
        <location>Plastid</location>
        <location>Chloroplast</location>
    </subcellularLocation>
</comment>
<comment type="similarity">
    <text evidence="2">Belongs to the universal ribosomal protein uL22 family.</text>
</comment>
<name>RK22_MANES</name>
<protein>
    <recommendedName>
        <fullName evidence="2">Large ribosomal subunit protein uL22c</fullName>
    </recommendedName>
    <alternativeName>
        <fullName>50S ribosomal protein L22, chloroplastic</fullName>
    </alternativeName>
</protein>
<sequence length="133" mass="15505">MIKIKKRKRNTYEVYALGQHICMSPHKARRIIDQIRGRSYEETLMILELMPYRACYPIFKLIYSAAANASHNMGFNEANLIISKAEVNEGTTVKKLKPQARGRGYPIKRSTCHISIVLKNISLYEEYDEYIYI</sequence>
<accession>B1NWI9</accession>
<geneLocation type="chloroplast"/>
<organism>
    <name type="scientific">Manihot esculenta</name>
    <name type="common">Cassava</name>
    <name type="synonym">Jatropha manihot</name>
    <dbReference type="NCBI Taxonomy" id="3983"/>
    <lineage>
        <taxon>Eukaryota</taxon>
        <taxon>Viridiplantae</taxon>
        <taxon>Streptophyta</taxon>
        <taxon>Embryophyta</taxon>
        <taxon>Tracheophyta</taxon>
        <taxon>Spermatophyta</taxon>
        <taxon>Magnoliopsida</taxon>
        <taxon>eudicotyledons</taxon>
        <taxon>Gunneridae</taxon>
        <taxon>Pentapetalae</taxon>
        <taxon>rosids</taxon>
        <taxon>fabids</taxon>
        <taxon>Malpighiales</taxon>
        <taxon>Euphorbiaceae</taxon>
        <taxon>Crotonoideae</taxon>
        <taxon>Manihoteae</taxon>
        <taxon>Manihot</taxon>
    </lineage>
</organism>
<keyword id="KW-0150">Chloroplast</keyword>
<keyword id="KW-0934">Plastid</keyword>
<keyword id="KW-0687">Ribonucleoprotein</keyword>
<keyword id="KW-0689">Ribosomal protein</keyword>
<keyword id="KW-0694">RNA-binding</keyword>
<keyword id="KW-0699">rRNA-binding</keyword>
<reference key="1">
    <citation type="journal article" date="2008" name="Theor. Appl. Genet.">
        <title>The complete nucleotide sequence of the cassava (Manihot esculenta) chloroplast genome and the evolution of atpF in Malpighiales: RNA editing and multiple losses of a group II intron.</title>
        <authorList>
            <person name="Daniell H."/>
            <person name="Wurdack K.J."/>
            <person name="Kanagaraj A."/>
            <person name="Lee S.-B."/>
            <person name="Saski C."/>
            <person name="Jansen R.K."/>
        </authorList>
    </citation>
    <scope>NUCLEOTIDE SEQUENCE [LARGE SCALE GENOMIC DNA]</scope>
    <source>
        <strain>cv. TME3</strain>
    </source>
</reference>
<gene>
    <name type="primary">rpl22</name>
</gene>
<feature type="chain" id="PRO_0000354582" description="Large ribosomal subunit protein uL22c">
    <location>
        <begin position="1"/>
        <end position="133"/>
    </location>
</feature>
<proteinExistence type="inferred from homology"/>